<gene>
    <name type="ordered locus">MT3488</name>
</gene>
<proteinExistence type="inferred from homology"/>
<organism>
    <name type="scientific">Mycobacterium tuberculosis (strain CDC 1551 / Oshkosh)</name>
    <dbReference type="NCBI Taxonomy" id="83331"/>
    <lineage>
        <taxon>Bacteria</taxon>
        <taxon>Bacillati</taxon>
        <taxon>Actinomycetota</taxon>
        <taxon>Actinomycetes</taxon>
        <taxon>Mycobacteriales</taxon>
        <taxon>Mycobacteriaceae</taxon>
        <taxon>Mycobacterium</taxon>
        <taxon>Mycobacterium tuberculosis complex</taxon>
    </lineage>
</organism>
<keyword id="KW-1185">Reference proteome</keyword>
<keyword id="KW-0808">Transferase</keyword>
<sequence>MNLVSEKEFLDLPLVSVAEIVRCRGPKVSVFPFDGTRRWFHLECNPQYDDYQQAALRQSIRILKMLFEHGIETVISPIFSDDLLDRGDRYIVQALEGMALLANDEEILSFYKEHEVHVLFYGDYKKRLPSTAQGAAVVKSFDDLTISTSSNTEHRLCFGVFGNDAAESVAQFSISWNETHGKPPTRREIIEGYYGEYVDKADMFIGFGRFSTFDFPLLSSGKTSLYFTVAPSYYMTETTLRRILYDHIYLRHFRPKPDYSAMSADQLNVLRNRYRAQPDRVFGVGCVHDGIWFAEG</sequence>
<comment type="function">
    <text evidence="1">Tuberculosinyl transferase that catalyzes the condensation of adenosine and tuberculosinyl diphosphate (TbPP) to generate 1-tuberculosinyladenosine (1-TbAd), which acts as an antiacid that directly protects M.tuberculosis from acid pH and physically remodels M.tuberculosis phagolysosomes. In addition, acts as a phosphatase that catalyzes the diphosphate-removal from TbPP to produce both tuberculosinol (TOH) and isotuberculosinol (iso-TOH).</text>
</comment>
<comment type="catalytic activity">
    <reaction evidence="1">
        <text>tuberculosinyl diphosphate + adenosine + H(+) = 1-tuberculosinyladenosine + diphosphate</text>
        <dbReference type="Rhea" id="RHEA:46000"/>
        <dbReference type="ChEBI" id="CHEBI:15378"/>
        <dbReference type="ChEBI" id="CHEBI:16335"/>
        <dbReference type="ChEBI" id="CHEBI:33019"/>
        <dbReference type="ChEBI" id="CHEBI:58822"/>
        <dbReference type="ChEBI" id="CHEBI:85603"/>
        <dbReference type="EC" id="2.5.1.153"/>
    </reaction>
</comment>
<comment type="catalytic activity">
    <reaction evidence="1">
        <text>tuberculosinyl diphosphate + H2O = tuberculosinol + diphosphate</text>
        <dbReference type="Rhea" id="RHEA:31783"/>
        <dbReference type="ChEBI" id="CHEBI:15377"/>
        <dbReference type="ChEBI" id="CHEBI:33019"/>
        <dbReference type="ChEBI" id="CHEBI:50387"/>
        <dbReference type="ChEBI" id="CHEBI:58822"/>
    </reaction>
</comment>
<comment type="catalytic activity">
    <reaction evidence="1">
        <text>tuberculosinyl diphosphate + H2O = (13R)-edaxadiene + diphosphate</text>
        <dbReference type="Rhea" id="RHEA:31787"/>
        <dbReference type="ChEBI" id="CHEBI:15377"/>
        <dbReference type="ChEBI" id="CHEBI:33019"/>
        <dbReference type="ChEBI" id="CHEBI:58822"/>
        <dbReference type="ChEBI" id="CHEBI:63178"/>
    </reaction>
</comment>
<comment type="catalytic activity">
    <reaction evidence="1">
        <text>tuberculosinyl diphosphate + H2O = (13S)-edaxadiene + diphosphate</text>
        <dbReference type="Rhea" id="RHEA:31791"/>
        <dbReference type="ChEBI" id="CHEBI:15377"/>
        <dbReference type="ChEBI" id="CHEBI:33019"/>
        <dbReference type="ChEBI" id="CHEBI:58822"/>
        <dbReference type="ChEBI" id="CHEBI:63180"/>
    </reaction>
</comment>
<comment type="cofactor">
    <cofactor evidence="1">
        <name>Mg(2+)</name>
        <dbReference type="ChEBI" id="CHEBI:18420"/>
    </cofactor>
</comment>
<comment type="subunit">
    <text evidence="1">Homodimer.</text>
</comment>
<comment type="similarity">
    <text evidence="2">Belongs to the diterpene synthase family.</text>
</comment>
<name>TUBAT_MYCTO</name>
<protein>
    <recommendedName>
        <fullName evidence="1">Tuberculosinyl adenosine transferase</fullName>
        <ecNumber evidence="1">2.5.1.153</ecNumber>
    </recommendedName>
    <alternativeName>
        <fullName evidence="1">Diterpene synthase</fullName>
    </alternativeName>
    <alternativeName>
        <fullName evidence="1">Isotuberculosinol synthase</fullName>
    </alternativeName>
    <alternativeName>
        <fullName evidence="1">Nosyberkol synthase</fullName>
    </alternativeName>
    <alternativeName>
        <fullName evidence="1">Tuberculosinol synthase</fullName>
    </alternativeName>
</protein>
<dbReference type="EC" id="2.5.1.153" evidence="1"/>
<dbReference type="EMBL" id="AE000516">
    <property type="protein sequence ID" value="AAK47824.1"/>
    <property type="molecule type" value="Genomic_DNA"/>
</dbReference>
<dbReference type="PIR" id="A70973">
    <property type="entry name" value="A70973"/>
</dbReference>
<dbReference type="RefSeq" id="WP_003417908.1">
    <property type="nucleotide sequence ID" value="NZ_KK341227.1"/>
</dbReference>
<dbReference type="SMR" id="P9WJ60"/>
<dbReference type="BindingDB" id="P9WJ60"/>
<dbReference type="KEGG" id="mtc:MT3488"/>
<dbReference type="HOGENOM" id="CLU_1100473_0_0_11"/>
<dbReference type="Proteomes" id="UP000001020">
    <property type="component" value="Chromosome"/>
</dbReference>
<dbReference type="GO" id="GO:0016765">
    <property type="term" value="F:transferase activity, transferring alkyl or aryl (other than methyl) groups"/>
    <property type="evidence" value="ECO:0007669"/>
    <property type="project" value="InterPro"/>
</dbReference>
<dbReference type="FunFam" id="3.40.1180.10:FF:000015">
    <property type="entry name" value="Diterpene synthase"/>
    <property type="match status" value="1"/>
</dbReference>
<dbReference type="Gene3D" id="3.40.1180.10">
    <property type="entry name" value="Decaprenyl diphosphate synthase-like"/>
    <property type="match status" value="1"/>
</dbReference>
<dbReference type="InterPro" id="IPR036424">
    <property type="entry name" value="UPP_synth-like_sf"/>
</dbReference>
<accession>P9WJ60</accession>
<accession>F2GEC4</accession>
<accession>L0TCL2</accession>
<accession>O50407</accession>
<accession>Q7D5L5</accession>
<evidence type="ECO:0000250" key="1">
    <source>
        <dbReference type="UniProtKB" id="P9WJ61"/>
    </source>
</evidence>
<evidence type="ECO:0000305" key="2"/>
<reference key="1">
    <citation type="journal article" date="2002" name="J. Bacteriol.">
        <title>Whole-genome comparison of Mycobacterium tuberculosis clinical and laboratory strains.</title>
        <authorList>
            <person name="Fleischmann R.D."/>
            <person name="Alland D."/>
            <person name="Eisen J.A."/>
            <person name="Carpenter L."/>
            <person name="White O."/>
            <person name="Peterson J.D."/>
            <person name="DeBoy R.T."/>
            <person name="Dodson R.J."/>
            <person name="Gwinn M.L."/>
            <person name="Haft D.H."/>
            <person name="Hickey E.K."/>
            <person name="Kolonay J.F."/>
            <person name="Nelson W.C."/>
            <person name="Umayam L.A."/>
            <person name="Ermolaeva M.D."/>
            <person name="Salzberg S.L."/>
            <person name="Delcher A."/>
            <person name="Utterback T.R."/>
            <person name="Weidman J.F."/>
            <person name="Khouri H.M."/>
            <person name="Gill J."/>
            <person name="Mikula A."/>
            <person name="Bishai W."/>
            <person name="Jacobs W.R. Jr."/>
            <person name="Venter J.C."/>
            <person name="Fraser C.M."/>
        </authorList>
    </citation>
    <scope>NUCLEOTIDE SEQUENCE [LARGE SCALE GENOMIC DNA]</scope>
    <source>
        <strain>CDC 1551 / Oshkosh</strain>
    </source>
</reference>
<feature type="chain" id="PRO_0000427886" description="Tuberculosinyl adenosine transferase">
    <location>
        <begin position="1"/>
        <end position="296"/>
    </location>
</feature>